<evidence type="ECO:0000255" key="1">
    <source>
        <dbReference type="HAMAP-Rule" id="MF_00030"/>
    </source>
</evidence>
<evidence type="ECO:0000255" key="2">
    <source>
        <dbReference type="PROSITE-ProRule" id="PRU01175"/>
    </source>
</evidence>
<organism>
    <name type="scientific">Yersinia pestis bv. Antiqua (strain Nepal516)</name>
    <dbReference type="NCBI Taxonomy" id="377628"/>
    <lineage>
        <taxon>Bacteria</taxon>
        <taxon>Pseudomonadati</taxon>
        <taxon>Pseudomonadota</taxon>
        <taxon>Gammaproteobacteria</taxon>
        <taxon>Enterobacterales</taxon>
        <taxon>Yersiniaceae</taxon>
        <taxon>Yersinia</taxon>
    </lineage>
</organism>
<proteinExistence type="inferred from homology"/>
<accession>Q1CLU0</accession>
<accession>C4GQ74</accession>
<feature type="chain" id="PRO_1000006556" description="Deoxyguanosinetriphosphate triphosphohydrolase">
    <location>
        <begin position="1"/>
        <end position="506"/>
    </location>
</feature>
<feature type="domain" description="HD" evidence="2">
    <location>
        <begin position="66"/>
        <end position="274"/>
    </location>
</feature>
<gene>
    <name evidence="1" type="primary">dgt</name>
    <name type="ordered locus">YPN_0708</name>
    <name type="ORF">YP516_0752</name>
</gene>
<reference key="1">
    <citation type="journal article" date="2006" name="J. Bacteriol.">
        <title>Complete genome sequence of Yersinia pestis strains Antiqua and Nepal516: evidence of gene reduction in an emerging pathogen.</title>
        <authorList>
            <person name="Chain P.S.G."/>
            <person name="Hu P."/>
            <person name="Malfatti S.A."/>
            <person name="Radnedge L."/>
            <person name="Larimer F."/>
            <person name="Vergez L.M."/>
            <person name="Worsham P."/>
            <person name="Chu M.C."/>
            <person name="Andersen G.L."/>
        </authorList>
    </citation>
    <scope>NUCLEOTIDE SEQUENCE [LARGE SCALE GENOMIC DNA]</scope>
    <source>
        <strain>Nepal516</strain>
    </source>
</reference>
<reference key="2">
    <citation type="submission" date="2009-04" db="EMBL/GenBank/DDBJ databases">
        <title>Yersinia pestis Nepal516A whole genome shotgun sequencing project.</title>
        <authorList>
            <person name="Plunkett G. III"/>
            <person name="Anderson B.D."/>
            <person name="Baumler D.J."/>
            <person name="Burland V."/>
            <person name="Cabot E.L."/>
            <person name="Glasner J.D."/>
            <person name="Mau B."/>
            <person name="Neeno-Eckwall E."/>
            <person name="Perna N.T."/>
            <person name="Munk A.C."/>
            <person name="Tapia R."/>
            <person name="Green L.D."/>
            <person name="Rogers Y.C."/>
            <person name="Detter J.C."/>
            <person name="Bruce D.C."/>
            <person name="Brettin T.S."/>
        </authorList>
    </citation>
    <scope>NUCLEOTIDE SEQUENCE [LARGE SCALE GENOMIC DNA]</scope>
    <source>
        <strain>Nepal516</strain>
    </source>
</reference>
<keyword id="KW-0378">Hydrolase</keyword>
<keyword id="KW-0460">Magnesium</keyword>
<protein>
    <recommendedName>
        <fullName evidence="1">Deoxyguanosinetriphosphate triphosphohydrolase</fullName>
        <shortName evidence="1">dGTP triphosphohydrolase</shortName>
        <shortName evidence="1">dGTPase</shortName>
        <ecNumber evidence="1">3.1.5.1</ecNumber>
    </recommendedName>
</protein>
<name>DGTP_YERPN</name>
<dbReference type="EC" id="3.1.5.1" evidence="1"/>
<dbReference type="EMBL" id="CP000305">
    <property type="protein sequence ID" value="ABG17040.1"/>
    <property type="molecule type" value="Genomic_DNA"/>
</dbReference>
<dbReference type="EMBL" id="ACNQ01000007">
    <property type="protein sequence ID" value="EEO77900.1"/>
    <property type="molecule type" value="Genomic_DNA"/>
</dbReference>
<dbReference type="RefSeq" id="WP_002209369.1">
    <property type="nucleotide sequence ID" value="NZ_ACNQ01000007.1"/>
</dbReference>
<dbReference type="SMR" id="Q1CLU0"/>
<dbReference type="GeneID" id="57975326"/>
<dbReference type="KEGG" id="ypn:YPN_0708"/>
<dbReference type="HOGENOM" id="CLU_028163_2_1_6"/>
<dbReference type="Proteomes" id="UP000008936">
    <property type="component" value="Chromosome"/>
</dbReference>
<dbReference type="GO" id="GO:0008832">
    <property type="term" value="F:dGTPase activity"/>
    <property type="evidence" value="ECO:0007669"/>
    <property type="project" value="UniProtKB-UniRule"/>
</dbReference>
<dbReference type="GO" id="GO:0000287">
    <property type="term" value="F:magnesium ion binding"/>
    <property type="evidence" value="ECO:0007669"/>
    <property type="project" value="UniProtKB-UniRule"/>
</dbReference>
<dbReference type="GO" id="GO:0006203">
    <property type="term" value="P:dGTP catabolic process"/>
    <property type="evidence" value="ECO:0007669"/>
    <property type="project" value="InterPro"/>
</dbReference>
<dbReference type="CDD" id="cd00077">
    <property type="entry name" value="HDc"/>
    <property type="match status" value="1"/>
</dbReference>
<dbReference type="FunFam" id="1.10.3210.10:FF:000009">
    <property type="entry name" value="Deoxyguanosinetriphosphate triphosphohydrolase"/>
    <property type="match status" value="1"/>
</dbReference>
<dbReference type="FunFam" id="1.10.3210.10:FF:000010">
    <property type="entry name" value="Deoxyguanosinetriphosphate triphosphohydrolase"/>
    <property type="match status" value="1"/>
</dbReference>
<dbReference type="FunFam" id="1.10.3410.10:FF:000001">
    <property type="entry name" value="Deoxyguanosinetriphosphate triphosphohydrolase"/>
    <property type="match status" value="1"/>
</dbReference>
<dbReference type="Gene3D" id="1.10.3210.10">
    <property type="entry name" value="Hypothetical protein af1432"/>
    <property type="match status" value="2"/>
</dbReference>
<dbReference type="Gene3D" id="1.10.3410.10">
    <property type="entry name" value="putative deoxyguanosinetriphosphate triphosphohydrolase like domain"/>
    <property type="match status" value="1"/>
</dbReference>
<dbReference type="HAMAP" id="MF_00030">
    <property type="entry name" value="dGTPase_type1"/>
    <property type="match status" value="1"/>
</dbReference>
<dbReference type="InterPro" id="IPR023293">
    <property type="entry name" value="dGTP_triP_hydro_central_sf"/>
</dbReference>
<dbReference type="InterPro" id="IPR006261">
    <property type="entry name" value="dGTPase"/>
</dbReference>
<dbReference type="InterPro" id="IPR050135">
    <property type="entry name" value="dGTPase-like"/>
</dbReference>
<dbReference type="InterPro" id="IPR020779">
    <property type="entry name" value="dNTPase_1"/>
</dbReference>
<dbReference type="InterPro" id="IPR003607">
    <property type="entry name" value="HD/PDEase_dom"/>
</dbReference>
<dbReference type="InterPro" id="IPR006674">
    <property type="entry name" value="HD_domain"/>
</dbReference>
<dbReference type="InterPro" id="IPR026875">
    <property type="entry name" value="PHydrolase_assoc_dom"/>
</dbReference>
<dbReference type="NCBIfam" id="TIGR01353">
    <property type="entry name" value="dGTP_triPase"/>
    <property type="match status" value="1"/>
</dbReference>
<dbReference type="NCBIfam" id="NF003429">
    <property type="entry name" value="PRK04926.1"/>
    <property type="match status" value="1"/>
</dbReference>
<dbReference type="PANTHER" id="PTHR11373:SF32">
    <property type="entry name" value="DEOXYGUANOSINETRIPHOSPHATE TRIPHOSPHOHYDROLASE"/>
    <property type="match status" value="1"/>
</dbReference>
<dbReference type="PANTHER" id="PTHR11373">
    <property type="entry name" value="DEOXYNUCLEOSIDE TRIPHOSPHATE TRIPHOSPHOHYDROLASE"/>
    <property type="match status" value="1"/>
</dbReference>
<dbReference type="Pfam" id="PF01966">
    <property type="entry name" value="HD"/>
    <property type="match status" value="1"/>
</dbReference>
<dbReference type="Pfam" id="PF13286">
    <property type="entry name" value="HD_assoc"/>
    <property type="match status" value="1"/>
</dbReference>
<dbReference type="SMART" id="SM00471">
    <property type="entry name" value="HDc"/>
    <property type="match status" value="1"/>
</dbReference>
<dbReference type="SUPFAM" id="SSF109604">
    <property type="entry name" value="HD-domain/PDEase-like"/>
    <property type="match status" value="1"/>
</dbReference>
<dbReference type="PROSITE" id="PS51831">
    <property type="entry name" value="HD"/>
    <property type="match status" value="1"/>
</dbReference>
<comment type="function">
    <text evidence="1">dGTPase preferentially hydrolyzes dGTP over the other canonical NTPs.</text>
</comment>
<comment type="catalytic activity">
    <reaction evidence="1">
        <text>dGTP + H2O = 2'-deoxyguanosine + triphosphate + H(+)</text>
        <dbReference type="Rhea" id="RHEA:15193"/>
        <dbReference type="ChEBI" id="CHEBI:15377"/>
        <dbReference type="ChEBI" id="CHEBI:15378"/>
        <dbReference type="ChEBI" id="CHEBI:17172"/>
        <dbReference type="ChEBI" id="CHEBI:18036"/>
        <dbReference type="ChEBI" id="CHEBI:61429"/>
        <dbReference type="EC" id="3.1.5.1"/>
    </reaction>
</comment>
<comment type="cofactor">
    <cofactor evidence="1">
        <name>Mg(2+)</name>
        <dbReference type="ChEBI" id="CHEBI:18420"/>
    </cofactor>
</comment>
<comment type="subunit">
    <text evidence="1">Homotetramer.</text>
</comment>
<comment type="similarity">
    <text evidence="1">Belongs to the dGTPase family. Type 1 subfamily.</text>
</comment>
<sequence length="506" mass="58424">MSGIDFKQKISFQRPFSKPSSAEDEYEITRVFESDRGRIVNSAAIRRLQQKTQVFPLERNAAVRSRLTHSLEVQQVGRYIAKEILNRFKQDKKITAYGLDKLLDPFESIVEMACLMHDIGNPPFGHFGESAINDWFTKRMDPNGGSGSEPQSTDQCQVDVLKLCEGETELNILRSKIRHDLSQFEGNAQAIRLVHSLLKLNLTYAQVGCILKYTKPAYWSAPIPASHNYLMKKPGFYLAEENYVKELRRELNMEEFDRFPLTYIMEAADDISYCIADLEDAVEKNIFSVEQLYDHMSQEWGAVTPGDLFDKVVGAAFRQLGREQGRRSSEDQFFMYLRVNTVGKLVPHAAQRFIENLPAVFSGSFNQALLEDSSAACKLLQIFKRVAVKHVFNHPEVEQLELQGYRVISGLLDIYSPLLAMPETAFTQLVADDRHRKYPIETRLFHKLSIKHRLAYAESAERIRNLPSEQYEIYEYYYRARLIQDYISGMTDLYAYDEYRRLMAAE</sequence>